<evidence type="ECO:0000250" key="1"/>
<evidence type="ECO:0000255" key="2"/>
<evidence type="ECO:0000255" key="3">
    <source>
        <dbReference type="PROSITE-ProRule" id="PRU10088"/>
    </source>
</evidence>
<evidence type="ECO:0000255" key="4">
    <source>
        <dbReference type="PROSITE-ProRule" id="PRU10089"/>
    </source>
</evidence>
<evidence type="ECO:0000255" key="5">
    <source>
        <dbReference type="PROSITE-ProRule" id="PRU10090"/>
    </source>
</evidence>
<evidence type="ECO:0000305" key="6"/>
<accession>P35591</accession>
<gene>
    <name type="primary">CYS1</name>
</gene>
<comment type="function">
    <text>The cysteine proteinases have a potential role in host-parasite interaction and virulence.</text>
</comment>
<comment type="developmental stage">
    <text>Primarily expressed by the amastigote stage. Expressed 4 times more in amastigotes than in promastigotes.</text>
</comment>
<comment type="similarity">
    <text evidence="3 4 5">Belongs to the peptidase C1 family.</text>
</comment>
<sequence>MARRNPLLFAIVVTILFVVCYGSALIAQTPPPVDNFVASAHYGSFKKRHGKAFGGDAEEGHRFNAFKQNMQTAYFLNTQNPHAHYDVSGKFADLTPQEFAKLYLNPDYYARHLKDHKEDVHVDDSAPSGVMSVDWRDKGAVTPVKNQGLCGSCWAFSAIGNIEGQWAASGHSLVSLSEQMLVSCDNIDEGCNGGLMDQAMNWIMQSHNGSVFTEASYPYTSGGGTRPPCHDEGEVGAKITGFLSLPHDEERIAEWVEKRGPVAVAVDATTWQLYFGGVVSLCLAWSLNHGVLIVGFNKNAKPPYWIVKNSWGSSWGEKGYIRLAMGSNQCMLKNYPVSATVESPHTPHVPTTTA</sequence>
<organism>
    <name type="scientific">Leishmania pifanoi</name>
    <dbReference type="NCBI Taxonomy" id="5682"/>
    <lineage>
        <taxon>Eukaryota</taxon>
        <taxon>Discoba</taxon>
        <taxon>Euglenozoa</taxon>
        <taxon>Kinetoplastea</taxon>
        <taxon>Metakinetoplastina</taxon>
        <taxon>Trypanosomatida</taxon>
        <taxon>Trypanosomatidae</taxon>
        <taxon>Leishmaniinae</taxon>
        <taxon>Leishmania</taxon>
    </lineage>
</organism>
<dbReference type="EC" id="3.4.22.-"/>
<dbReference type="EMBL" id="L29168">
    <property type="protein sequence ID" value="AAA91859.1"/>
    <property type="molecule type" value="Genomic_DNA"/>
</dbReference>
<dbReference type="EMBL" id="L00717">
    <property type="status" value="NOT_ANNOTATED_CDS"/>
    <property type="molecule type" value="mRNA"/>
</dbReference>
<dbReference type="PIR" id="B48566">
    <property type="entry name" value="B48566"/>
</dbReference>
<dbReference type="SMR" id="P35591"/>
<dbReference type="MEROPS" id="C01.076"/>
<dbReference type="GlyCosmos" id="P35591">
    <property type="glycosylation" value="1 site, No reported glycans"/>
</dbReference>
<dbReference type="GO" id="GO:0008234">
    <property type="term" value="F:cysteine-type peptidase activity"/>
    <property type="evidence" value="ECO:0007669"/>
    <property type="project" value="UniProtKB-KW"/>
</dbReference>
<dbReference type="GO" id="GO:0006508">
    <property type="term" value="P:proteolysis"/>
    <property type="evidence" value="ECO:0007669"/>
    <property type="project" value="UniProtKB-KW"/>
</dbReference>
<dbReference type="CDD" id="cd02248">
    <property type="entry name" value="Peptidase_C1A"/>
    <property type="match status" value="1"/>
</dbReference>
<dbReference type="FunFam" id="3.90.70.10:FF:000138">
    <property type="entry name" value="Cruzipain"/>
    <property type="match status" value="1"/>
</dbReference>
<dbReference type="Gene3D" id="1.10.287.2250">
    <property type="match status" value="1"/>
</dbReference>
<dbReference type="Gene3D" id="3.90.70.10">
    <property type="entry name" value="Cysteine proteinases"/>
    <property type="match status" value="1"/>
</dbReference>
<dbReference type="InterPro" id="IPR038765">
    <property type="entry name" value="Papain-like_cys_pep_sf"/>
</dbReference>
<dbReference type="InterPro" id="IPR025661">
    <property type="entry name" value="Pept_asp_AS"/>
</dbReference>
<dbReference type="InterPro" id="IPR000169">
    <property type="entry name" value="Pept_cys_AS"/>
</dbReference>
<dbReference type="InterPro" id="IPR025660">
    <property type="entry name" value="Pept_his_AS"/>
</dbReference>
<dbReference type="InterPro" id="IPR013128">
    <property type="entry name" value="Peptidase_C1A"/>
</dbReference>
<dbReference type="InterPro" id="IPR000668">
    <property type="entry name" value="Peptidase_C1A_C"/>
</dbReference>
<dbReference type="InterPro" id="IPR039417">
    <property type="entry name" value="Peptidase_C1A_papain-like"/>
</dbReference>
<dbReference type="InterPro" id="IPR013201">
    <property type="entry name" value="Prot_inhib_I29"/>
</dbReference>
<dbReference type="PANTHER" id="PTHR12411">
    <property type="entry name" value="CYSTEINE PROTEASE FAMILY C1-RELATED"/>
    <property type="match status" value="1"/>
</dbReference>
<dbReference type="Pfam" id="PF08246">
    <property type="entry name" value="Inhibitor_I29"/>
    <property type="match status" value="1"/>
</dbReference>
<dbReference type="Pfam" id="PF00112">
    <property type="entry name" value="Peptidase_C1"/>
    <property type="match status" value="1"/>
</dbReference>
<dbReference type="PRINTS" id="PR00705">
    <property type="entry name" value="PAPAIN"/>
</dbReference>
<dbReference type="SMART" id="SM00848">
    <property type="entry name" value="Inhibitor_I29"/>
    <property type="match status" value="1"/>
</dbReference>
<dbReference type="SMART" id="SM00645">
    <property type="entry name" value="Pept_C1"/>
    <property type="match status" value="1"/>
</dbReference>
<dbReference type="SUPFAM" id="SSF54001">
    <property type="entry name" value="Cysteine proteinases"/>
    <property type="match status" value="1"/>
</dbReference>
<dbReference type="PROSITE" id="PS00640">
    <property type="entry name" value="THIOL_PROTEASE_ASN"/>
    <property type="match status" value="1"/>
</dbReference>
<dbReference type="PROSITE" id="PS00139">
    <property type="entry name" value="THIOL_PROTEASE_CYS"/>
    <property type="match status" value="1"/>
</dbReference>
<dbReference type="PROSITE" id="PS00639">
    <property type="entry name" value="THIOL_PROTEASE_HIS"/>
    <property type="match status" value="1"/>
</dbReference>
<feature type="signal peptide" evidence="2">
    <location>
        <begin position="1"/>
        <end position="24"/>
    </location>
</feature>
<feature type="propeptide" id="PRO_0000026384" description="Activation peptide" evidence="6">
    <location>
        <begin position="25"/>
        <end position="125"/>
    </location>
</feature>
<feature type="chain" id="PRO_0000026385" description="Cysteine proteinase 1">
    <location>
        <begin position="126"/>
        <end position="354"/>
    </location>
</feature>
<feature type="active site" evidence="1">
    <location>
        <position position="153"/>
    </location>
</feature>
<feature type="active site" evidence="1">
    <location>
        <position position="289"/>
    </location>
</feature>
<feature type="active site" evidence="1">
    <location>
        <position position="309"/>
    </location>
</feature>
<feature type="glycosylation site" description="N-linked (GlcNAc...) asparagine" evidence="2">
    <location>
        <position position="208"/>
    </location>
</feature>
<feature type="disulfide bond" evidence="1">
    <location>
        <begin position="150"/>
        <end position="191"/>
    </location>
</feature>
<feature type="disulfide bond" evidence="1">
    <location>
        <begin position="184"/>
        <end position="229"/>
    </location>
</feature>
<feature type="disulfide bond" evidence="1">
    <location>
        <begin position="282"/>
        <end position="330"/>
    </location>
</feature>
<feature type="sequence conflict" description="In Ref. 2; L00717." evidence="6" ref="2">
    <original>L</original>
    <variation>Q</variation>
    <location>
        <position position="149"/>
    </location>
</feature>
<feature type="sequence conflict" description="In Ref. 2; L00717." evidence="6" ref="2">
    <original>S</original>
    <variation>W</variation>
    <location>
        <position position="152"/>
    </location>
</feature>
<feature type="sequence conflict" description="In Ref. 2; L00717." evidence="6" ref="2">
    <original>F</original>
    <variation>S</variation>
    <location>
        <position position="296"/>
    </location>
</feature>
<proteinExistence type="evidence at transcript level"/>
<protein>
    <recommendedName>
        <fullName>Cysteine proteinase 1</fullName>
        <ecNumber>3.4.22.-</ecNumber>
    </recommendedName>
    <alternativeName>
        <fullName>Amastigote cysteine proteinase A-1</fullName>
    </alternativeName>
</protein>
<name>CYSP1_LEIPI</name>
<keyword id="KW-1015">Disulfide bond</keyword>
<keyword id="KW-0325">Glycoprotein</keyword>
<keyword id="KW-0378">Hydrolase</keyword>
<keyword id="KW-0645">Protease</keyword>
<keyword id="KW-0732">Signal</keyword>
<keyword id="KW-0788">Thiol protease</keyword>
<keyword id="KW-0843">Virulence</keyword>
<keyword id="KW-0865">Zymogen</keyword>
<reference key="1">
    <citation type="submission" date="1996-03" db="EMBL/GenBank/DDBJ databases">
        <authorList>
            <person name="Almeida R.W."/>
        </authorList>
    </citation>
    <scope>NUCLEOTIDE SEQUENCE</scope>
</reference>
<reference key="2">
    <citation type="journal article" date="1993" name="Mol. Biochem. Parasitol.">
        <title>Identification of two distinct cysteine proteinase genes of Leishmania pifanoi axenic amastigotes using the polymerase chain reaction.</title>
        <authorList>
            <person name="Traub-Cseko Y.M."/>
            <person name="Duboise M."/>
            <person name="Boukai L.K."/>
            <person name="McMahon-Pratt D."/>
        </authorList>
    </citation>
    <scope>NUCLEOTIDE SEQUENCE OF 147-311</scope>
</reference>